<gene>
    <name evidence="1" type="primary">prfA</name>
    <name type="ordered locus">ABO_0523</name>
</gene>
<keyword id="KW-0963">Cytoplasm</keyword>
<keyword id="KW-0488">Methylation</keyword>
<keyword id="KW-0648">Protein biosynthesis</keyword>
<keyword id="KW-1185">Reference proteome</keyword>
<feature type="chain" id="PRO_0000263227" description="Peptide chain release factor 1">
    <location>
        <begin position="1"/>
        <end position="361"/>
    </location>
</feature>
<feature type="modified residue" description="N5-methylglutamine" evidence="1">
    <location>
        <position position="237"/>
    </location>
</feature>
<evidence type="ECO:0000255" key="1">
    <source>
        <dbReference type="HAMAP-Rule" id="MF_00093"/>
    </source>
</evidence>
<accession>Q0VS77</accession>
<protein>
    <recommendedName>
        <fullName evidence="1">Peptide chain release factor 1</fullName>
        <shortName evidence="1">RF-1</shortName>
    </recommendedName>
</protein>
<organism>
    <name type="scientific">Alcanivorax borkumensis (strain ATCC 700651 / DSM 11573 / NCIMB 13689 / SK2)</name>
    <dbReference type="NCBI Taxonomy" id="393595"/>
    <lineage>
        <taxon>Bacteria</taxon>
        <taxon>Pseudomonadati</taxon>
        <taxon>Pseudomonadota</taxon>
        <taxon>Gammaproteobacteria</taxon>
        <taxon>Oceanospirillales</taxon>
        <taxon>Alcanivoracaceae</taxon>
        <taxon>Alcanivorax</taxon>
    </lineage>
</organism>
<reference key="1">
    <citation type="journal article" date="2006" name="Nat. Biotechnol.">
        <title>Genome sequence of the ubiquitous hydrocarbon-degrading marine bacterium Alcanivorax borkumensis.</title>
        <authorList>
            <person name="Schneiker S."/>
            <person name="Martins dos Santos V.A.P."/>
            <person name="Bartels D."/>
            <person name="Bekel T."/>
            <person name="Brecht M."/>
            <person name="Buhrmester J."/>
            <person name="Chernikova T.N."/>
            <person name="Denaro R."/>
            <person name="Ferrer M."/>
            <person name="Gertler C."/>
            <person name="Goesmann A."/>
            <person name="Golyshina O.V."/>
            <person name="Kaminski F."/>
            <person name="Khachane A.N."/>
            <person name="Lang S."/>
            <person name="Linke B."/>
            <person name="McHardy A.C."/>
            <person name="Meyer F."/>
            <person name="Nechitaylo T."/>
            <person name="Puehler A."/>
            <person name="Regenhardt D."/>
            <person name="Rupp O."/>
            <person name="Sabirova J.S."/>
            <person name="Selbitschka W."/>
            <person name="Yakimov M.M."/>
            <person name="Timmis K.N."/>
            <person name="Vorhoelter F.-J."/>
            <person name="Weidner S."/>
            <person name="Kaiser O."/>
            <person name="Golyshin P.N."/>
        </authorList>
    </citation>
    <scope>NUCLEOTIDE SEQUENCE [LARGE SCALE GENOMIC DNA]</scope>
    <source>
        <strain>ATCC 700651 / DSM 11573 / NCIMB 13689 / SK2</strain>
    </source>
</reference>
<proteinExistence type="inferred from homology"/>
<sequence>MKASLQGKLDKLADRFEELAGLLSDPDVISNQNQFRDLSREYAEIDPVVKCYRQYQQAVEDHGAAKAMQDDSDADMREMGAEEARDAQERMEALAAELQKLMLPKDPRDGANVFLEVRAGTGGDEAAIFAGDLFRMYSKYADQRGWKVEMVSASEGEHGGYKEVIARVIGDGVYSRMKFESGAHRVQRVPATESQGRIHTSACTVAIMAEAEDLGDIKIRTEDLRIDTYRSSGAGGQHVNTTDSAVRITHLPTGVVVECQDERSQHKNKARAMSLLSAKLYDAQQNAAHAEQAAERKSLVGSGDRSERIRTYNYPQGRVTDHRINLTLYRLNEIVEGDLDEILGALLAEYQADQLAALGEH</sequence>
<comment type="function">
    <text evidence="1">Peptide chain release factor 1 directs the termination of translation in response to the peptide chain termination codons UAG and UAA.</text>
</comment>
<comment type="subcellular location">
    <subcellularLocation>
        <location evidence="1">Cytoplasm</location>
    </subcellularLocation>
</comment>
<comment type="PTM">
    <text evidence="1">Methylated by PrmC. Methylation increases the termination efficiency of RF1.</text>
</comment>
<comment type="similarity">
    <text evidence="1">Belongs to the prokaryotic/mitochondrial release factor family.</text>
</comment>
<name>RF1_ALCBS</name>
<dbReference type="EMBL" id="AM286690">
    <property type="protein sequence ID" value="CAL15971.1"/>
    <property type="molecule type" value="Genomic_DNA"/>
</dbReference>
<dbReference type="RefSeq" id="WP_011587809.1">
    <property type="nucleotide sequence ID" value="NC_008260.1"/>
</dbReference>
<dbReference type="SMR" id="Q0VS77"/>
<dbReference type="STRING" id="393595.ABO_0523"/>
<dbReference type="KEGG" id="abo:ABO_0523"/>
<dbReference type="eggNOG" id="COG0216">
    <property type="taxonomic scope" value="Bacteria"/>
</dbReference>
<dbReference type="HOGENOM" id="CLU_036856_0_1_6"/>
<dbReference type="OrthoDB" id="9806673at2"/>
<dbReference type="Proteomes" id="UP000008871">
    <property type="component" value="Chromosome"/>
</dbReference>
<dbReference type="GO" id="GO:0005737">
    <property type="term" value="C:cytoplasm"/>
    <property type="evidence" value="ECO:0007669"/>
    <property type="project" value="UniProtKB-SubCell"/>
</dbReference>
<dbReference type="GO" id="GO:0016149">
    <property type="term" value="F:translation release factor activity, codon specific"/>
    <property type="evidence" value="ECO:0007669"/>
    <property type="project" value="UniProtKB-UniRule"/>
</dbReference>
<dbReference type="FunFam" id="3.30.160.20:FF:000004">
    <property type="entry name" value="Peptide chain release factor 1"/>
    <property type="match status" value="1"/>
</dbReference>
<dbReference type="FunFam" id="3.30.70.1660:FF:000002">
    <property type="entry name" value="Peptide chain release factor 1"/>
    <property type="match status" value="1"/>
</dbReference>
<dbReference type="FunFam" id="3.30.70.1660:FF:000004">
    <property type="entry name" value="Peptide chain release factor 1"/>
    <property type="match status" value="1"/>
</dbReference>
<dbReference type="Gene3D" id="3.30.160.20">
    <property type="match status" value="1"/>
</dbReference>
<dbReference type="Gene3D" id="3.30.70.1660">
    <property type="match status" value="1"/>
</dbReference>
<dbReference type="Gene3D" id="6.10.140.1950">
    <property type="match status" value="1"/>
</dbReference>
<dbReference type="HAMAP" id="MF_00093">
    <property type="entry name" value="Rel_fac_1"/>
    <property type="match status" value="1"/>
</dbReference>
<dbReference type="InterPro" id="IPR005139">
    <property type="entry name" value="PCRF"/>
</dbReference>
<dbReference type="InterPro" id="IPR000352">
    <property type="entry name" value="Pep_chain_release_fac_I"/>
</dbReference>
<dbReference type="InterPro" id="IPR045853">
    <property type="entry name" value="Pep_chain_release_fac_I_sf"/>
</dbReference>
<dbReference type="InterPro" id="IPR050057">
    <property type="entry name" value="Prokaryotic/Mito_RF"/>
</dbReference>
<dbReference type="InterPro" id="IPR004373">
    <property type="entry name" value="RF-1"/>
</dbReference>
<dbReference type="NCBIfam" id="TIGR00019">
    <property type="entry name" value="prfA"/>
    <property type="match status" value="1"/>
</dbReference>
<dbReference type="NCBIfam" id="NF001859">
    <property type="entry name" value="PRK00591.1"/>
    <property type="match status" value="1"/>
</dbReference>
<dbReference type="PANTHER" id="PTHR43804">
    <property type="entry name" value="LD18447P"/>
    <property type="match status" value="1"/>
</dbReference>
<dbReference type="PANTHER" id="PTHR43804:SF7">
    <property type="entry name" value="LD18447P"/>
    <property type="match status" value="1"/>
</dbReference>
<dbReference type="Pfam" id="PF03462">
    <property type="entry name" value="PCRF"/>
    <property type="match status" value="1"/>
</dbReference>
<dbReference type="Pfam" id="PF00472">
    <property type="entry name" value="RF-1"/>
    <property type="match status" value="1"/>
</dbReference>
<dbReference type="SMART" id="SM00937">
    <property type="entry name" value="PCRF"/>
    <property type="match status" value="1"/>
</dbReference>
<dbReference type="SUPFAM" id="SSF75620">
    <property type="entry name" value="Release factor"/>
    <property type="match status" value="1"/>
</dbReference>
<dbReference type="PROSITE" id="PS00745">
    <property type="entry name" value="RF_PROK_I"/>
    <property type="match status" value="1"/>
</dbReference>